<accession>Q6P1E1</accession>
<accession>Q6PDK9</accession>
<accession>Q6PF85</accession>
<accession>Q8BW47</accession>
<evidence type="ECO:0000250" key="1">
    <source>
        <dbReference type="UniProtKB" id="Q9ULJ6"/>
    </source>
</evidence>
<evidence type="ECO:0000255" key="2">
    <source>
        <dbReference type="PROSITE-ProRule" id="PRU00452"/>
    </source>
</evidence>
<evidence type="ECO:0000256" key="3">
    <source>
        <dbReference type="SAM" id="MobiDB-lite"/>
    </source>
</evidence>
<evidence type="ECO:0000269" key="4">
    <source>
    </source>
</evidence>
<evidence type="ECO:0000269" key="5">
    <source>
    </source>
</evidence>
<evidence type="ECO:0000269" key="6">
    <source>
    </source>
</evidence>
<evidence type="ECO:0000303" key="7">
    <source>
    </source>
</evidence>
<evidence type="ECO:0000305" key="8"/>
<keyword id="KW-0010">Activator</keyword>
<keyword id="KW-0025">Alternative splicing</keyword>
<keyword id="KW-0963">Cytoplasm</keyword>
<keyword id="KW-1017">Isopeptide bond</keyword>
<keyword id="KW-0479">Metal-binding</keyword>
<keyword id="KW-0539">Nucleus</keyword>
<keyword id="KW-1185">Reference proteome</keyword>
<keyword id="KW-0804">Transcription</keyword>
<keyword id="KW-0805">Transcription regulation</keyword>
<keyword id="KW-0832">Ubl conjugation</keyword>
<keyword id="KW-0862">Zinc</keyword>
<keyword id="KW-0863">Zinc-finger</keyword>
<dbReference type="EMBL" id="BC057691">
    <property type="protein sequence ID" value="AAH57691.1"/>
    <property type="status" value="ALT_INIT"/>
    <property type="molecule type" value="mRNA"/>
</dbReference>
<dbReference type="EMBL" id="BC058646">
    <property type="protein sequence ID" value="AAH58646.1"/>
    <property type="molecule type" value="mRNA"/>
</dbReference>
<dbReference type="EMBL" id="BC065120">
    <property type="protein sequence ID" value="AAH65120.1"/>
    <property type="molecule type" value="mRNA"/>
</dbReference>
<dbReference type="EMBL" id="AK054366">
    <property type="protein sequence ID" value="BAC35753.1"/>
    <property type="status" value="ALT_SEQ"/>
    <property type="molecule type" value="mRNA"/>
</dbReference>
<dbReference type="CCDS" id="CCDS26873.1">
    <molecule id="Q6P1E1-1"/>
</dbReference>
<dbReference type="CCDS" id="CCDS79280.1">
    <molecule id="Q6P1E1-2"/>
</dbReference>
<dbReference type="RefSeq" id="NP_001297595.1">
    <molecule id="Q6P1E1-2"/>
    <property type="nucleotide sequence ID" value="NM_001310666.1"/>
</dbReference>
<dbReference type="RefSeq" id="NP_899031.2">
    <molecule id="Q6P1E1-1"/>
    <property type="nucleotide sequence ID" value="NM_183208.4"/>
</dbReference>
<dbReference type="RefSeq" id="XP_036014570.1">
    <molecule id="Q6P1E1-1"/>
    <property type="nucleotide sequence ID" value="XM_036158677.1"/>
</dbReference>
<dbReference type="SMR" id="Q6P1E1"/>
<dbReference type="BioGRID" id="236589">
    <property type="interactions" value="1"/>
</dbReference>
<dbReference type="FunCoup" id="Q6P1E1">
    <property type="interactions" value="3907"/>
</dbReference>
<dbReference type="IntAct" id="Q6P1E1">
    <property type="interactions" value="5"/>
</dbReference>
<dbReference type="STRING" id="10090.ENSMUSP00000124863"/>
<dbReference type="GlyGen" id="Q6P1E1">
    <property type="glycosylation" value="2 sites"/>
</dbReference>
<dbReference type="iPTMnet" id="Q6P1E1"/>
<dbReference type="PhosphoSitePlus" id="Q6P1E1"/>
<dbReference type="PaxDb" id="10090-ENSMUSP00000124863"/>
<dbReference type="PeptideAtlas" id="Q6P1E1"/>
<dbReference type="ProteomicsDB" id="302065">
    <molecule id="Q6P1E1-1"/>
</dbReference>
<dbReference type="ProteomicsDB" id="302066">
    <molecule id="Q6P1E1-2"/>
</dbReference>
<dbReference type="Pumba" id="Q6P1E1"/>
<dbReference type="Antibodypedia" id="29855">
    <property type="antibodies" value="164 antibodies from 26 providers"/>
</dbReference>
<dbReference type="DNASU" id="328365"/>
<dbReference type="Ensembl" id="ENSMUST00000007961.15">
    <molecule id="Q6P1E1-2"/>
    <property type="protein sequence ID" value="ENSMUSP00000007961.9"/>
    <property type="gene ID" value="ENSMUSG00000007817.16"/>
</dbReference>
<dbReference type="Ensembl" id="ENSMUST00000162645.8">
    <molecule id="Q6P1E1-1"/>
    <property type="protein sequence ID" value="ENSMUSP00000124863.2"/>
    <property type="gene ID" value="ENSMUSG00000007817.16"/>
</dbReference>
<dbReference type="GeneID" id="328365"/>
<dbReference type="KEGG" id="mmu:328365"/>
<dbReference type="UCSC" id="uc007srn.2">
    <molecule id="Q6P1E1-1"/>
    <property type="organism name" value="mouse"/>
</dbReference>
<dbReference type="UCSC" id="uc007sro.2">
    <molecule id="Q6P1E1-2"/>
    <property type="organism name" value="mouse"/>
</dbReference>
<dbReference type="AGR" id="MGI:3040693"/>
<dbReference type="CTD" id="57178"/>
<dbReference type="MGI" id="MGI:3040693">
    <property type="gene designation" value="Zmiz1"/>
</dbReference>
<dbReference type="VEuPathDB" id="HostDB:ENSMUSG00000007817"/>
<dbReference type="eggNOG" id="KOG2169">
    <property type="taxonomic scope" value="Eukaryota"/>
</dbReference>
<dbReference type="GeneTree" id="ENSGT01030000234539"/>
<dbReference type="HOGENOM" id="CLU_009461_1_0_1"/>
<dbReference type="InParanoid" id="Q6P1E1"/>
<dbReference type="OMA" id="PPMAMNQ"/>
<dbReference type="OrthoDB" id="27975at2759"/>
<dbReference type="PhylomeDB" id="Q6P1E1"/>
<dbReference type="TreeFam" id="TF316952"/>
<dbReference type="BioGRID-ORCS" id="328365">
    <property type="hits" value="8 hits in 78 CRISPR screens"/>
</dbReference>
<dbReference type="ChiTaRS" id="Zmiz1">
    <property type="organism name" value="mouse"/>
</dbReference>
<dbReference type="PRO" id="PR:Q6P1E1"/>
<dbReference type="Proteomes" id="UP000000589">
    <property type="component" value="Chromosome 14"/>
</dbReference>
<dbReference type="RNAct" id="Q6P1E1">
    <property type="molecule type" value="protein"/>
</dbReference>
<dbReference type="Bgee" id="ENSMUSG00000007817">
    <property type="expression patterns" value="Expressed in humerus cartilage element and 247 other cell types or tissues"/>
</dbReference>
<dbReference type="GO" id="GO:0005737">
    <property type="term" value="C:cytoplasm"/>
    <property type="evidence" value="ECO:0000250"/>
    <property type="project" value="UniProtKB"/>
</dbReference>
<dbReference type="GO" id="GO:0005829">
    <property type="term" value="C:cytosol"/>
    <property type="evidence" value="ECO:0007669"/>
    <property type="project" value="Ensembl"/>
</dbReference>
<dbReference type="GO" id="GO:0005654">
    <property type="term" value="C:nucleoplasm"/>
    <property type="evidence" value="ECO:0000250"/>
    <property type="project" value="UniProtKB"/>
</dbReference>
<dbReference type="GO" id="GO:0046332">
    <property type="term" value="F:SMAD binding"/>
    <property type="evidence" value="ECO:0007669"/>
    <property type="project" value="Ensembl"/>
</dbReference>
<dbReference type="GO" id="GO:0003713">
    <property type="term" value="F:transcription coactivator activity"/>
    <property type="evidence" value="ECO:0007669"/>
    <property type="project" value="Ensembl"/>
</dbReference>
<dbReference type="GO" id="GO:0008270">
    <property type="term" value="F:zinc ion binding"/>
    <property type="evidence" value="ECO:0007669"/>
    <property type="project" value="UniProtKB-KW"/>
</dbReference>
<dbReference type="GO" id="GO:0030521">
    <property type="term" value="P:androgen receptor signaling pathway"/>
    <property type="evidence" value="ECO:0000250"/>
    <property type="project" value="UniProtKB"/>
</dbReference>
<dbReference type="GO" id="GO:0048844">
    <property type="term" value="P:artery morphogenesis"/>
    <property type="evidence" value="ECO:0000315"/>
    <property type="project" value="MGI"/>
</dbReference>
<dbReference type="GO" id="GO:0090398">
    <property type="term" value="P:cellular senescence"/>
    <property type="evidence" value="ECO:0000314"/>
    <property type="project" value="MGI"/>
</dbReference>
<dbReference type="GO" id="GO:0048589">
    <property type="term" value="P:developmental growth"/>
    <property type="evidence" value="ECO:0000315"/>
    <property type="project" value="MGI"/>
</dbReference>
<dbReference type="GO" id="GO:0003007">
    <property type="term" value="P:heart morphogenesis"/>
    <property type="evidence" value="ECO:0000315"/>
    <property type="project" value="MGI"/>
</dbReference>
<dbReference type="GO" id="GO:0001701">
    <property type="term" value="P:in utero embryonic development"/>
    <property type="evidence" value="ECO:0000315"/>
    <property type="project" value="MGI"/>
</dbReference>
<dbReference type="GO" id="GO:0048146">
    <property type="term" value="P:positive regulation of fibroblast proliferation"/>
    <property type="evidence" value="ECO:0000315"/>
    <property type="project" value="MGI"/>
</dbReference>
<dbReference type="GO" id="GO:0045747">
    <property type="term" value="P:positive regulation of Notch signaling pathway"/>
    <property type="evidence" value="ECO:0000315"/>
    <property type="project" value="UniProtKB"/>
</dbReference>
<dbReference type="GO" id="GO:0045582">
    <property type="term" value="P:positive regulation of T cell differentiation"/>
    <property type="evidence" value="ECO:0000315"/>
    <property type="project" value="UniProtKB"/>
</dbReference>
<dbReference type="GO" id="GO:0045944">
    <property type="term" value="P:positive regulation of transcription by RNA polymerase II"/>
    <property type="evidence" value="ECO:0000315"/>
    <property type="project" value="MGI"/>
</dbReference>
<dbReference type="GO" id="GO:0021852">
    <property type="term" value="P:pyramidal neuron migration to cerebral cortex"/>
    <property type="evidence" value="ECO:0007669"/>
    <property type="project" value="Ensembl"/>
</dbReference>
<dbReference type="GO" id="GO:0060395">
    <property type="term" value="P:SMAD protein signal transduction"/>
    <property type="evidence" value="ECO:0000250"/>
    <property type="project" value="UniProtKB"/>
</dbReference>
<dbReference type="GO" id="GO:0007179">
    <property type="term" value="P:transforming growth factor beta receptor signaling pathway"/>
    <property type="evidence" value="ECO:0000250"/>
    <property type="project" value="UniProtKB"/>
</dbReference>
<dbReference type="GO" id="GO:0001570">
    <property type="term" value="P:vasculogenesis"/>
    <property type="evidence" value="ECO:0000315"/>
    <property type="project" value="MGI"/>
</dbReference>
<dbReference type="GO" id="GO:0007296">
    <property type="term" value="P:vitellogenesis"/>
    <property type="evidence" value="ECO:0000315"/>
    <property type="project" value="MGI"/>
</dbReference>
<dbReference type="FunFam" id="3.30.40.10:FF:000012">
    <property type="entry name" value="Zinc finger MIZ domain-containing protein 2"/>
    <property type="match status" value="1"/>
</dbReference>
<dbReference type="Gene3D" id="3.30.40.10">
    <property type="entry name" value="Zinc/RING finger domain, C3HC4 (zinc finger)"/>
    <property type="match status" value="1"/>
</dbReference>
<dbReference type="InterPro" id="IPR040797">
    <property type="entry name" value="Zmiz1_N"/>
</dbReference>
<dbReference type="InterPro" id="IPR004181">
    <property type="entry name" value="Znf_MIZ"/>
</dbReference>
<dbReference type="InterPro" id="IPR013083">
    <property type="entry name" value="Znf_RING/FYVE/PHD"/>
</dbReference>
<dbReference type="PANTHER" id="PTHR10782">
    <property type="entry name" value="ZINC FINGER MIZ DOMAIN-CONTAINING PROTEIN"/>
    <property type="match status" value="1"/>
</dbReference>
<dbReference type="PANTHER" id="PTHR10782:SF7">
    <property type="entry name" value="ZINC FINGER MIZ DOMAIN-CONTAINING PROTEIN 1"/>
    <property type="match status" value="1"/>
</dbReference>
<dbReference type="Pfam" id="PF02891">
    <property type="entry name" value="zf-MIZ"/>
    <property type="match status" value="1"/>
</dbReference>
<dbReference type="Pfam" id="PF18028">
    <property type="entry name" value="Zmiz1_N"/>
    <property type="match status" value="1"/>
</dbReference>
<dbReference type="PROSITE" id="PS51044">
    <property type="entry name" value="ZF_SP_RING"/>
    <property type="match status" value="1"/>
</dbReference>
<comment type="function">
    <text evidence="1 6">Acts as a transcriptional coactivator. Increases ligand-dependent transcriptional activity of AR and promotes AR sumoylation. The stimulation of AR activity is dependent upon sumoylation (By similarity). Also functions as a transcriptional coactivator in the TGF-beta signaling pathway by increasing the activity of the SMAD3/SMAD4 transcriptional complex (By similarity). Involved in transcriptional activation of a subset of NOTCH1 target genes including MYC. Involved in thymocyte and T cell development (PubMed:26522984). Involved in the regulation of postmitotic positioning of pyramidal neurons in the developing cerebral cortex (By similarity).</text>
</comment>
<comment type="subunit">
    <text evidence="1 5">Interacts with AR, but not with ESR1, NR3C1, PGR, THRB nor VDR. Interacts with NOTCH1 and RBPJ (By similarity). Interacts with SMARCA4. Interacts (via SP-RING-type domain) with SMAD3 and SMAD4 (via MH2 domain) (By similarity).</text>
</comment>
<comment type="interaction">
    <interactant intactId="EBI-647033">
        <id>Q6P1E1</id>
    </interactant>
    <interactant intactId="EBI-1210244">
        <id>Q3TKT4</id>
        <label>Smarca4</label>
    </interactant>
    <organismsDiffer>false</organismsDiffer>
    <experiments>2</experiments>
</comment>
<comment type="subcellular location">
    <subcellularLocation>
        <location evidence="1">Nucleus</location>
        <location evidence="1">Nucleoplasm</location>
    </subcellularLocation>
    <subcellularLocation>
        <location evidence="1">Cytoplasm</location>
    </subcellularLocation>
    <text evidence="1">Enriched at replication foci throughout S phase.</text>
</comment>
<comment type="alternative products">
    <event type="alternative splicing"/>
    <isoform>
        <id>Q6P1E1-1</id>
        <name>1</name>
        <sequence type="displayed"/>
    </isoform>
    <isoform>
        <id>Q6P1E1-2</id>
        <name>2</name>
        <sequence type="described" ref="VSP_012187"/>
    </isoform>
</comment>
<comment type="tissue specificity">
    <text evidence="5">Expressed in brain.</text>
</comment>
<comment type="domain">
    <text evidence="1">The C-terminal proline-rich domain possesses a significant intrinsic transcriptional activity. This activity is inhibited by the N-terminus in the full-length protein.</text>
</comment>
<comment type="domain">
    <text evidence="1">The SP-RING-type domain mediates interaction with SMAD3 and SMAD4.</text>
</comment>
<comment type="disruption phenotype">
    <text evidence="4">Death between 9.5-10.5 dpc. Mice are approximately half the size of wild-type littermates and display vascular and cell viability defects. Some heterozygotes also do not survive but those that do have no apparent defects.</text>
</comment>
<comment type="miscellaneous">
    <molecule>Isoform 2</molecule>
    <text evidence="8">May be due to a competing acceptor splice site.</text>
</comment>
<comment type="sequence caution" evidence="8">
    <conflict type="erroneous initiation">
        <sequence resource="EMBL-CDS" id="AAH57691"/>
    </conflict>
</comment>
<comment type="sequence caution" evidence="8">
    <conflict type="frameshift">
        <sequence resource="EMBL-CDS" id="BAC35753"/>
    </conflict>
</comment>
<comment type="sequence caution" evidence="8">
    <conflict type="miscellaneous discrepancy">
        <sequence resource="EMBL-CDS" id="BAC35753"/>
    </conflict>
    <text>Intron retention.</text>
</comment>
<sequence length="1072" mass="115851">MNSMDRHIQQTNDRLQCIKQHLQNPANFHNAATELLDWCGDPRAFQRPFEQSLMGCLTVVSRVAAQQGFDLDLGYRLLAVCAANRDKFTPKSAALLSSWCEELGRLLLLRHQKSRQNDPPGKLPMQPPLSSMSSMKPTLSHSDGSFPYDSVPWQQNTNQPPGSLSVVTTVWGVTNTSQSQVLGNPMANANNPMNPGGNPMASGMSTSNPGINSPQFAGQQQQFSTKAGPAQPYIQPNMYGRPGYPGSGGFGASYPGGPSAPAGMGIPPHTRPPADFTQPAAAAAAAAVAAAAATATATATATVAALQETQNKDINQYGPVCSSFQMGPTQAYNSQFMNQPGPRGPASMGGSLNPAGMAAGMTPSGMSGPPMGMNQPRPPGISPFGTHGQRMPQQTYPGPRPQSLPIQSIKRPYPGEPNYGNQQYGPNSQFPTQPGQYPTPNPPRPLTSPNYPGQRMPSQPSTGQYPPPTVNMGQYYKPEQFNGQNNTFSSGSSYSSYSQGSVNRPPRPVPVANYPHSPVPGNPTPPMTPGSSIPPYLSPSQDVKPPFPPDIKPNMSALPPPPANHNDELRLTFPVRDGVVLEPFRLEHNLAVSNHVFHLRPTVHQTLMWRSDLELQFKCYHHEDRQMNTNWPASVQVSVNATPLTIERGDNKTSHKPLHLKHVCQPGRNTIQITVTACCCSHLFVLQLVHRPSVRSVLQGLLKKRLLPAEHCITKIKRNFSSVAASSGNTTLNGEDGVEQTAIKVSLKCPITFRRIQLPARGHDCKHVQCFDLESYLQLNCERGTWRCPVCNKTALLEGLEVDQYMWGILNAIQHSEFEEVTIDPTCSWRPVPIKSDLHIKDDPDGIPSKRFKTMSPSQMIMPNVMEMIAALGPGPSPYPLPPPPGGTSSNDYSSQGNNYQGHGNFDFPHGNPGGTSMNDFMHGPPQLSHPPDMPNNMAALEKPLSHPMQETMPHAGSSDQPHPSIQQGLHVPHPSSQAGPPLHHSGAPPPSQPPRQPPQAAPGNHPHSDLTFNPSSALEGQAGAQGASDMPEPSLDLLPELTNPDELLSYLDPPDLPSNSNDDLLSLFENN</sequence>
<protein>
    <recommendedName>
        <fullName>Zinc finger MIZ domain-containing protein 1</fullName>
    </recommendedName>
    <alternativeName>
        <fullName>PIAS-like protein Zimp10</fullName>
    </alternativeName>
    <alternativeName>
        <fullName>Retinoic acid-induced protein 17</fullName>
    </alternativeName>
</protein>
<proteinExistence type="evidence at protein level"/>
<gene>
    <name type="primary">Zmiz1</name>
    <name type="synonym">Rai17</name>
    <name type="synonym">Zimp10</name>
</gene>
<organism>
    <name type="scientific">Mus musculus</name>
    <name type="common">Mouse</name>
    <dbReference type="NCBI Taxonomy" id="10090"/>
    <lineage>
        <taxon>Eukaryota</taxon>
        <taxon>Metazoa</taxon>
        <taxon>Chordata</taxon>
        <taxon>Craniata</taxon>
        <taxon>Vertebrata</taxon>
        <taxon>Euteleostomi</taxon>
        <taxon>Mammalia</taxon>
        <taxon>Eutheria</taxon>
        <taxon>Euarchontoglires</taxon>
        <taxon>Glires</taxon>
        <taxon>Rodentia</taxon>
        <taxon>Myomorpha</taxon>
        <taxon>Muroidea</taxon>
        <taxon>Muridae</taxon>
        <taxon>Murinae</taxon>
        <taxon>Mus</taxon>
        <taxon>Mus</taxon>
    </lineage>
</organism>
<name>ZMIZ1_MOUSE</name>
<reference key="1">
    <citation type="journal article" date="2004" name="Genome Res.">
        <title>The status, quality, and expansion of the NIH full-length cDNA project: the Mammalian Gene Collection (MGC).</title>
        <authorList>
            <consortium name="The MGC Project Team"/>
        </authorList>
    </citation>
    <scope>NUCLEOTIDE SEQUENCE [LARGE SCALE MRNA] (ISOFORMS 1 AND 2)</scope>
    <source>
        <strain>C57BL/6J</strain>
        <strain>Czech II</strain>
        <tissue>Brain</tissue>
        <tissue>Mammary tumor</tissue>
    </source>
</reference>
<reference key="2">
    <citation type="journal article" date="2005" name="Science">
        <title>The transcriptional landscape of the mammalian genome.</title>
        <authorList>
            <person name="Carninci P."/>
            <person name="Kasukawa T."/>
            <person name="Katayama S."/>
            <person name="Gough J."/>
            <person name="Frith M.C."/>
            <person name="Maeda N."/>
            <person name="Oyama R."/>
            <person name="Ravasi T."/>
            <person name="Lenhard B."/>
            <person name="Wells C."/>
            <person name="Kodzius R."/>
            <person name="Shimokawa K."/>
            <person name="Bajic V.B."/>
            <person name="Brenner S.E."/>
            <person name="Batalov S."/>
            <person name="Forrest A.R."/>
            <person name="Zavolan M."/>
            <person name="Davis M.J."/>
            <person name="Wilming L.G."/>
            <person name="Aidinis V."/>
            <person name="Allen J.E."/>
            <person name="Ambesi-Impiombato A."/>
            <person name="Apweiler R."/>
            <person name="Aturaliya R.N."/>
            <person name="Bailey T.L."/>
            <person name="Bansal M."/>
            <person name="Baxter L."/>
            <person name="Beisel K.W."/>
            <person name="Bersano T."/>
            <person name="Bono H."/>
            <person name="Chalk A.M."/>
            <person name="Chiu K.P."/>
            <person name="Choudhary V."/>
            <person name="Christoffels A."/>
            <person name="Clutterbuck D.R."/>
            <person name="Crowe M.L."/>
            <person name="Dalla E."/>
            <person name="Dalrymple B.P."/>
            <person name="de Bono B."/>
            <person name="Della Gatta G."/>
            <person name="di Bernardo D."/>
            <person name="Down T."/>
            <person name="Engstrom P."/>
            <person name="Fagiolini M."/>
            <person name="Faulkner G."/>
            <person name="Fletcher C.F."/>
            <person name="Fukushima T."/>
            <person name="Furuno M."/>
            <person name="Futaki S."/>
            <person name="Gariboldi M."/>
            <person name="Georgii-Hemming P."/>
            <person name="Gingeras T.R."/>
            <person name="Gojobori T."/>
            <person name="Green R.E."/>
            <person name="Gustincich S."/>
            <person name="Harbers M."/>
            <person name="Hayashi Y."/>
            <person name="Hensch T.K."/>
            <person name="Hirokawa N."/>
            <person name="Hill D."/>
            <person name="Huminiecki L."/>
            <person name="Iacono M."/>
            <person name="Ikeo K."/>
            <person name="Iwama A."/>
            <person name="Ishikawa T."/>
            <person name="Jakt M."/>
            <person name="Kanapin A."/>
            <person name="Katoh M."/>
            <person name="Kawasawa Y."/>
            <person name="Kelso J."/>
            <person name="Kitamura H."/>
            <person name="Kitano H."/>
            <person name="Kollias G."/>
            <person name="Krishnan S.P."/>
            <person name="Kruger A."/>
            <person name="Kummerfeld S.K."/>
            <person name="Kurochkin I.V."/>
            <person name="Lareau L.F."/>
            <person name="Lazarevic D."/>
            <person name="Lipovich L."/>
            <person name="Liu J."/>
            <person name="Liuni S."/>
            <person name="McWilliam S."/>
            <person name="Madan Babu M."/>
            <person name="Madera M."/>
            <person name="Marchionni L."/>
            <person name="Matsuda H."/>
            <person name="Matsuzawa S."/>
            <person name="Miki H."/>
            <person name="Mignone F."/>
            <person name="Miyake S."/>
            <person name="Morris K."/>
            <person name="Mottagui-Tabar S."/>
            <person name="Mulder N."/>
            <person name="Nakano N."/>
            <person name="Nakauchi H."/>
            <person name="Ng P."/>
            <person name="Nilsson R."/>
            <person name="Nishiguchi S."/>
            <person name="Nishikawa S."/>
            <person name="Nori F."/>
            <person name="Ohara O."/>
            <person name="Okazaki Y."/>
            <person name="Orlando V."/>
            <person name="Pang K.C."/>
            <person name="Pavan W.J."/>
            <person name="Pavesi G."/>
            <person name="Pesole G."/>
            <person name="Petrovsky N."/>
            <person name="Piazza S."/>
            <person name="Reed J."/>
            <person name="Reid J.F."/>
            <person name="Ring B.Z."/>
            <person name="Ringwald M."/>
            <person name="Rost B."/>
            <person name="Ruan Y."/>
            <person name="Salzberg S.L."/>
            <person name="Sandelin A."/>
            <person name="Schneider C."/>
            <person name="Schoenbach C."/>
            <person name="Sekiguchi K."/>
            <person name="Semple C.A."/>
            <person name="Seno S."/>
            <person name="Sessa L."/>
            <person name="Sheng Y."/>
            <person name="Shibata Y."/>
            <person name="Shimada H."/>
            <person name="Shimada K."/>
            <person name="Silva D."/>
            <person name="Sinclair B."/>
            <person name="Sperling S."/>
            <person name="Stupka E."/>
            <person name="Sugiura K."/>
            <person name="Sultana R."/>
            <person name="Takenaka Y."/>
            <person name="Taki K."/>
            <person name="Tammoja K."/>
            <person name="Tan S.L."/>
            <person name="Tang S."/>
            <person name="Taylor M.S."/>
            <person name="Tegner J."/>
            <person name="Teichmann S.A."/>
            <person name="Ueda H.R."/>
            <person name="van Nimwegen E."/>
            <person name="Verardo R."/>
            <person name="Wei C.L."/>
            <person name="Yagi K."/>
            <person name="Yamanishi H."/>
            <person name="Zabarovsky E."/>
            <person name="Zhu S."/>
            <person name="Zimmer A."/>
            <person name="Hide W."/>
            <person name="Bult C."/>
            <person name="Grimmond S.M."/>
            <person name="Teasdale R.D."/>
            <person name="Liu E.T."/>
            <person name="Brusic V."/>
            <person name="Quackenbush J."/>
            <person name="Wahlestedt C."/>
            <person name="Mattick J.S."/>
            <person name="Hume D.A."/>
            <person name="Kai C."/>
            <person name="Sasaki D."/>
            <person name="Tomaru Y."/>
            <person name="Fukuda S."/>
            <person name="Kanamori-Katayama M."/>
            <person name="Suzuki M."/>
            <person name="Aoki J."/>
            <person name="Arakawa T."/>
            <person name="Iida J."/>
            <person name="Imamura K."/>
            <person name="Itoh M."/>
            <person name="Kato T."/>
            <person name="Kawaji H."/>
            <person name="Kawagashira N."/>
            <person name="Kawashima T."/>
            <person name="Kojima M."/>
            <person name="Kondo S."/>
            <person name="Konno H."/>
            <person name="Nakano K."/>
            <person name="Ninomiya N."/>
            <person name="Nishio T."/>
            <person name="Okada M."/>
            <person name="Plessy C."/>
            <person name="Shibata K."/>
            <person name="Shiraki T."/>
            <person name="Suzuki S."/>
            <person name="Tagami M."/>
            <person name="Waki K."/>
            <person name="Watahiki A."/>
            <person name="Okamura-Oho Y."/>
            <person name="Suzuki H."/>
            <person name="Kawai J."/>
            <person name="Hayashizaki Y."/>
        </authorList>
    </citation>
    <scope>NUCLEOTIDE SEQUENCE [LARGE SCALE MRNA] OF 1-416 (ISOFORM 1)</scope>
    <source>
        <strain>C57BL/6J</strain>
        <tissue>Ovary</tissue>
    </source>
</reference>
<reference key="3">
    <citation type="journal article" date="2006" name="Nucl. Recept. Signal.">
        <title>Zimp7 and Zimp10, two novel PIAS-like proteins, function as androgen receptor coregulators.</title>
        <authorList>
            <person name="Beliakoff J."/>
            <person name="Sun Z."/>
        </authorList>
    </citation>
    <scope>DISRUPTION PHENOTYPE</scope>
</reference>
<reference key="4">
    <citation type="journal article" date="2013" name="Cancer Res.">
        <title>Convergence of the ZMIZ1 and NOTCH1 pathways at C-MYC in acute T lymphoblastic leukemias.</title>
        <authorList>
            <person name="Rakowski L.A."/>
            <person name="Garagiola D.D."/>
            <person name="Li C.M."/>
            <person name="Decker M."/>
            <person name="Caruso S."/>
            <person name="Jones M."/>
            <person name="Kuick R."/>
            <person name="Cierpicki T."/>
            <person name="Maillard I."/>
            <person name="Chiang M.Y."/>
        </authorList>
    </citation>
    <scope>FUNCTION</scope>
</reference>
<reference key="5">
    <citation type="journal article" date="2015" name="Immunity">
        <title>The PIAS-like coactivator Zmiz1 is a direct and selective cofactor of Notch1 in T cell development and leukemia.</title>
        <authorList>
            <person name="Pinnell N."/>
            <person name="Yan R."/>
            <person name="Cho H.J."/>
            <person name="Keeley T."/>
            <person name="Murai M.J."/>
            <person name="Liu Y."/>
            <person name="Alarcon A.S."/>
            <person name="Qin J."/>
            <person name="Wang Q."/>
            <person name="Kuick R."/>
            <person name="Elenitoba-Johnson K.S."/>
            <person name="Maillard I."/>
            <person name="Samuelson L.C."/>
            <person name="Cierpicki T."/>
            <person name="Chiang M.Y."/>
        </authorList>
    </citation>
    <scope>FUNCTION</scope>
</reference>
<reference key="6">
    <citation type="journal article" date="2015" name="Neurogenetics">
        <title>A de novo t(10;19)(q22.3;q13.33) leads to ZMIZ1/PRR12 reciprocal fusion transcripts in a girl with intellectual disability and neuropsychiatric alterations.</title>
        <authorList>
            <person name="Cordova-Fletes C."/>
            <person name="Dominguez M.G."/>
            <person name="Delint-Ramirez I."/>
            <person name="Martinez-Rodriguez H.G."/>
            <person name="Rivas-Estilla A.M."/>
            <person name="Barros-Nunez P."/>
            <person name="Ortiz-Lopez R."/>
            <person name="Neira V.A."/>
        </authorList>
    </citation>
    <scope>INTERACTION WITH SMARCA4</scope>
    <scope>TISSUE SPECIFICITY</scope>
</reference>
<feature type="chain" id="PRO_0000218988" description="Zinc finger MIZ domain-containing protein 1">
    <location>
        <begin position="1"/>
        <end position="1072"/>
    </location>
</feature>
<feature type="zinc finger region" description="SP-RING-type" evidence="2">
    <location>
        <begin position="734"/>
        <end position="815"/>
    </location>
</feature>
<feature type="region of interest" description="Sufficient for transactivation activity; sufficient for interaction with NOTCH1" evidence="1">
    <location>
        <begin position="1"/>
        <end position="120"/>
    </location>
</feature>
<feature type="region of interest" description="Disordered" evidence="3">
    <location>
        <begin position="112"/>
        <end position="141"/>
    </location>
</feature>
<feature type="region of interest" description="Disordered" evidence="3">
    <location>
        <begin position="362"/>
        <end position="538"/>
    </location>
</feature>
<feature type="region of interest" description="Transactivation domain" evidence="1">
    <location>
        <begin position="844"/>
        <end position="1072"/>
    </location>
</feature>
<feature type="region of interest" description="Disordered" evidence="3">
    <location>
        <begin position="875"/>
        <end position="1072"/>
    </location>
</feature>
<feature type="compositionally biased region" description="Low complexity" evidence="3">
    <location>
        <begin position="128"/>
        <end position="141"/>
    </location>
</feature>
<feature type="compositionally biased region" description="Polar residues" evidence="3">
    <location>
        <begin position="419"/>
        <end position="436"/>
    </location>
</feature>
<feature type="compositionally biased region" description="Pro residues" evidence="3">
    <location>
        <begin position="437"/>
        <end position="446"/>
    </location>
</feature>
<feature type="compositionally biased region" description="Low complexity" evidence="3">
    <location>
        <begin position="489"/>
        <end position="501"/>
    </location>
</feature>
<feature type="compositionally biased region" description="Pro residues" evidence="3">
    <location>
        <begin position="517"/>
        <end position="528"/>
    </location>
</feature>
<feature type="compositionally biased region" description="Pro residues" evidence="3">
    <location>
        <begin position="875"/>
        <end position="886"/>
    </location>
</feature>
<feature type="compositionally biased region" description="Polar residues" evidence="3">
    <location>
        <begin position="888"/>
        <end position="902"/>
    </location>
</feature>
<feature type="compositionally biased region" description="Polar residues" evidence="3">
    <location>
        <begin position="958"/>
        <end position="968"/>
    </location>
</feature>
<feature type="compositionally biased region" description="Pro residues" evidence="3">
    <location>
        <begin position="988"/>
        <end position="1001"/>
    </location>
</feature>
<feature type="compositionally biased region" description="Low complexity" evidence="3">
    <location>
        <begin position="1045"/>
        <end position="1072"/>
    </location>
</feature>
<feature type="binding site" evidence="2">
    <location>
        <position position="765"/>
    </location>
    <ligand>
        <name>Zn(2+)</name>
        <dbReference type="ChEBI" id="CHEBI:29105"/>
    </ligand>
</feature>
<feature type="binding site" evidence="2">
    <location>
        <position position="767"/>
    </location>
    <ligand>
        <name>Zn(2+)</name>
        <dbReference type="ChEBI" id="CHEBI:29105"/>
    </ligand>
</feature>
<feature type="binding site" evidence="2">
    <location>
        <position position="788"/>
    </location>
    <ligand>
        <name>Zn(2+)</name>
        <dbReference type="ChEBI" id="CHEBI:29105"/>
    </ligand>
</feature>
<feature type="binding site" evidence="2">
    <location>
        <position position="791"/>
    </location>
    <ligand>
        <name>Zn(2+)</name>
        <dbReference type="ChEBI" id="CHEBI:29105"/>
    </ligand>
</feature>
<feature type="cross-link" description="Glycyl lysine isopeptide (Lys-Gly) (interchain with G-Cter in SUMO2)" evidence="1">
    <location>
        <position position="91"/>
    </location>
</feature>
<feature type="cross-link" description="Glycyl lysine isopeptide (Lys-Gly) (interchain with G-Cter in SUMO2)" evidence="1">
    <location>
        <position position="841"/>
    </location>
</feature>
<feature type="cross-link" description="Glycyl lysine isopeptide (Lys-Gly) (interchain with G-Cter in SUMO2)" evidence="1">
    <location>
        <position position="850"/>
    </location>
</feature>
<feature type="splice variant" id="VSP_012187" description="In isoform 2." evidence="7">
    <location>
        <begin position="320"/>
        <end position="325"/>
    </location>
</feature>